<accession>Q9I740</accession>
<gene>
    <name evidence="2" type="primary">tsi6</name>
    <name type="ordered locus">PA0092</name>
</gene>
<organism>
    <name type="scientific">Pseudomonas aeruginosa (strain ATCC 15692 / DSM 22644 / CIP 104116 / JCM 14847 / LMG 12228 / 1C / PRS 101 / PAO1)</name>
    <dbReference type="NCBI Taxonomy" id="208964"/>
    <lineage>
        <taxon>Bacteria</taxon>
        <taxon>Pseudomonadati</taxon>
        <taxon>Pseudomonadota</taxon>
        <taxon>Gammaproteobacteria</taxon>
        <taxon>Pseudomonadales</taxon>
        <taxon>Pseudomonadaceae</taxon>
        <taxon>Pseudomonas</taxon>
    </lineage>
</organism>
<comment type="function">
    <text evidence="1">Immunity protein that plays a role in preventing early activation of toxin Tse6.</text>
</comment>
<comment type="disruption phenotype">
    <text evidence="1">Deletion mutant cells show Tse6-dependent intoxication with a dramatic increase in division time.</text>
</comment>
<name>TSI6_PSEAE</name>
<feature type="chain" id="PRO_0000449112" description="Immune protein Tsi6">
    <location>
        <begin position="1"/>
        <end position="94"/>
    </location>
</feature>
<feature type="helix" evidence="6">
    <location>
        <begin position="3"/>
        <end position="20"/>
    </location>
</feature>
<feature type="helix" evidence="6">
    <location>
        <begin position="25"/>
        <end position="42"/>
    </location>
</feature>
<feature type="strand" evidence="7">
    <location>
        <begin position="44"/>
        <end position="46"/>
    </location>
</feature>
<feature type="helix" evidence="6">
    <location>
        <begin position="49"/>
        <end position="53"/>
    </location>
</feature>
<feature type="helix" evidence="6">
    <location>
        <begin position="56"/>
        <end position="63"/>
    </location>
</feature>
<feature type="turn" evidence="6">
    <location>
        <begin position="65"/>
        <end position="67"/>
    </location>
</feature>
<feature type="helix" evidence="6">
    <location>
        <begin position="69"/>
        <end position="86"/>
    </location>
</feature>
<dbReference type="EMBL" id="AE004091">
    <property type="protein sequence ID" value="AAG03482.1"/>
    <property type="molecule type" value="Genomic_DNA"/>
</dbReference>
<dbReference type="PIR" id="A83633">
    <property type="entry name" value="A83633"/>
</dbReference>
<dbReference type="RefSeq" id="NP_248782.1">
    <property type="nucleotide sequence ID" value="NC_002516.2"/>
</dbReference>
<dbReference type="RefSeq" id="WP_003104961.1">
    <property type="nucleotide sequence ID" value="NZ_QZGE01000015.1"/>
</dbReference>
<dbReference type="PDB" id="4ZUY">
    <property type="method" value="X-ray"/>
    <property type="resolution" value="1.95 A"/>
    <property type="chains" value="A/B=1-94"/>
</dbReference>
<dbReference type="PDB" id="4ZV0">
    <property type="method" value="X-ray"/>
    <property type="resolution" value="1.40 A"/>
    <property type="chains" value="B=1-94"/>
</dbReference>
<dbReference type="PDB" id="5JTK">
    <property type="method" value="NMR"/>
    <property type="chains" value="A=1-94"/>
</dbReference>
<dbReference type="PDBsum" id="4ZUY"/>
<dbReference type="PDBsum" id="4ZV0"/>
<dbReference type="PDBsum" id="5JTK"/>
<dbReference type="BMRB" id="Q9I740"/>
<dbReference type="EMDB" id="EMD-3112"/>
<dbReference type="EMDB" id="EMD-3113"/>
<dbReference type="SMR" id="Q9I740"/>
<dbReference type="STRING" id="208964.PA0092"/>
<dbReference type="PaxDb" id="208964-PA0092"/>
<dbReference type="GeneID" id="880664"/>
<dbReference type="KEGG" id="pae:PA0092"/>
<dbReference type="PATRIC" id="fig|208964.12.peg.96"/>
<dbReference type="PseudoCAP" id="PA0092"/>
<dbReference type="HOGENOM" id="CLU_161899_0_0_6"/>
<dbReference type="InParanoid" id="Q9I740"/>
<dbReference type="OrthoDB" id="6937479at2"/>
<dbReference type="BioCyc" id="PAER208964:G1FZ6-94-MONOMER"/>
<dbReference type="EvolutionaryTrace" id="Q9I740"/>
<dbReference type="Proteomes" id="UP000002438">
    <property type="component" value="Chromosome"/>
</dbReference>
<dbReference type="GO" id="GO:0097351">
    <property type="term" value="F:toxin sequestering activity"/>
    <property type="evidence" value="ECO:0000315"/>
    <property type="project" value="PseudoCAP"/>
</dbReference>
<dbReference type="GO" id="GO:0033103">
    <property type="term" value="P:protein secretion by the type VI secretion system"/>
    <property type="evidence" value="ECO:0000315"/>
    <property type="project" value="PseudoCAP"/>
</dbReference>
<dbReference type="InterPro" id="IPR040818">
    <property type="entry name" value="Tsi6"/>
</dbReference>
<dbReference type="Pfam" id="PF18660">
    <property type="entry name" value="Tsi6"/>
    <property type="match status" value="1"/>
</dbReference>
<evidence type="ECO:0000269" key="1">
    <source>
    </source>
</evidence>
<evidence type="ECO:0000303" key="2">
    <source>
    </source>
</evidence>
<evidence type="ECO:0007744" key="3">
    <source>
        <dbReference type="PDB" id="4ZUY"/>
    </source>
</evidence>
<evidence type="ECO:0007744" key="4">
    <source>
        <dbReference type="PDB" id="4ZV0"/>
    </source>
</evidence>
<evidence type="ECO:0007744" key="5">
    <source>
        <dbReference type="PDB" id="5JTK"/>
    </source>
</evidence>
<evidence type="ECO:0007829" key="6">
    <source>
        <dbReference type="PDB" id="4ZV0"/>
    </source>
</evidence>
<evidence type="ECO:0007829" key="7">
    <source>
        <dbReference type="PDB" id="5JTK"/>
    </source>
</evidence>
<protein>
    <recommendedName>
        <fullName evidence="2">Immune protein Tsi6</fullName>
    </recommendedName>
</protein>
<proteinExistence type="evidence at protein level"/>
<reference key="1">
    <citation type="journal article" date="2000" name="Nature">
        <title>Complete genome sequence of Pseudomonas aeruginosa PAO1, an opportunistic pathogen.</title>
        <authorList>
            <person name="Stover C.K."/>
            <person name="Pham X.-Q.T."/>
            <person name="Erwin A.L."/>
            <person name="Mizoguchi S.D."/>
            <person name="Warrener P."/>
            <person name="Hickey M.J."/>
            <person name="Brinkman F.S.L."/>
            <person name="Hufnagle W.O."/>
            <person name="Kowalik D.J."/>
            <person name="Lagrou M."/>
            <person name="Garber R.L."/>
            <person name="Goltry L."/>
            <person name="Tolentino E."/>
            <person name="Westbrock-Wadman S."/>
            <person name="Yuan Y."/>
            <person name="Brody L.L."/>
            <person name="Coulter S.N."/>
            <person name="Folger K.R."/>
            <person name="Kas A."/>
            <person name="Larbig K."/>
            <person name="Lim R.M."/>
            <person name="Smith K.A."/>
            <person name="Spencer D.H."/>
            <person name="Wong G.K.-S."/>
            <person name="Wu Z."/>
            <person name="Paulsen I.T."/>
            <person name="Reizer J."/>
            <person name="Saier M.H. Jr."/>
            <person name="Hancock R.E.W."/>
            <person name="Lory S."/>
            <person name="Olson M.V."/>
        </authorList>
    </citation>
    <scope>NUCLEOTIDE SEQUENCE [LARGE SCALE GENOMIC DNA]</scope>
    <source>
        <strain>ATCC 15692 / DSM 22644 / CIP 104116 / JCM 14847 / LMG 12228 / 1C / PRS 101 / PAO1</strain>
    </source>
</reference>
<reference evidence="3 4" key="2">
    <citation type="journal article" date="2015" name="Cell">
        <title>An interbacterial NAD(P)(+) glycohydrolase toxin requires elongation factor Tu for delivery to target cells.</title>
        <authorList>
            <person name="Whitney J.C."/>
            <person name="Quentin D."/>
            <person name="Sawai S."/>
            <person name="LeRoux M."/>
            <person name="Harding B.N."/>
            <person name="Ledvina H.E."/>
            <person name="Tran B.Q."/>
            <person name="Robinson H."/>
            <person name="Goo Y.A."/>
            <person name="Goodlett D.R."/>
            <person name="Raunser S."/>
            <person name="Mougous J.D."/>
        </authorList>
    </citation>
    <scope>X-RAY CRYSTALLOGRAPHY (1.40 ANGSTROMS)</scope>
    <scope>FUNCTION</scope>
    <scope>DISRUPTION PHENOTYPE</scope>
</reference>
<reference evidence="5" key="3">
    <citation type="submission" date="2016-05" db="PDB data bank">
        <title>NMR structure of Uncharacterized protein from Pseudomonas aeruginosa PAO1.</title>
        <authorList>
            <person name="Barnwal R.P."/>
            <person name="Varani G."/>
        </authorList>
    </citation>
    <scope>STRUCTURE BY NMR</scope>
</reference>
<sequence length="94" mass="10678">MTPIEYIDRALALVVDRLARYPGYEVLLSAEKQLQYIRSVLLDRSLDRSALHRLTLGSIAVKEFDETDPELSRALKDAYYVGIRTGRGLKVDLP</sequence>
<keyword id="KW-0002">3D-structure</keyword>
<keyword id="KW-1185">Reference proteome</keyword>